<dbReference type="EMBL" id="BX571856">
    <property type="protein sequence ID" value="CAG39758.1"/>
    <property type="molecule type" value="Genomic_DNA"/>
</dbReference>
<dbReference type="RefSeq" id="WP_001041283.1">
    <property type="nucleotide sequence ID" value="NC_002952.2"/>
</dbReference>
<dbReference type="SMR" id="Q6GIU7"/>
<dbReference type="KEGG" id="sar:SAR0748"/>
<dbReference type="HOGENOM" id="CLU_001265_10_11_9"/>
<dbReference type="Proteomes" id="UP000000596">
    <property type="component" value="Chromosome"/>
</dbReference>
<dbReference type="GO" id="GO:0005886">
    <property type="term" value="C:plasma membrane"/>
    <property type="evidence" value="ECO:0007669"/>
    <property type="project" value="UniProtKB-SubCell"/>
</dbReference>
<dbReference type="GO" id="GO:0042910">
    <property type="term" value="F:xenobiotic transmembrane transporter activity"/>
    <property type="evidence" value="ECO:0007669"/>
    <property type="project" value="InterPro"/>
</dbReference>
<dbReference type="CDD" id="cd17325">
    <property type="entry name" value="MFS_MdtG_SLC18_like"/>
    <property type="match status" value="1"/>
</dbReference>
<dbReference type="Gene3D" id="1.20.1250.20">
    <property type="entry name" value="MFS general substrate transporter like domains"/>
    <property type="match status" value="1"/>
</dbReference>
<dbReference type="InterPro" id="IPR011701">
    <property type="entry name" value="MFS"/>
</dbReference>
<dbReference type="InterPro" id="IPR020846">
    <property type="entry name" value="MFS_dom"/>
</dbReference>
<dbReference type="InterPro" id="IPR050189">
    <property type="entry name" value="MFS_Efflux_Transporters"/>
</dbReference>
<dbReference type="InterPro" id="IPR036259">
    <property type="entry name" value="MFS_trans_sf"/>
</dbReference>
<dbReference type="InterPro" id="IPR004734">
    <property type="entry name" value="Multidrug-R"/>
</dbReference>
<dbReference type="InterPro" id="IPR001958">
    <property type="entry name" value="Tet-R_TetA/multi-R_MdtG-like"/>
</dbReference>
<dbReference type="NCBIfam" id="TIGR00880">
    <property type="entry name" value="2_A_01_02"/>
    <property type="match status" value="1"/>
</dbReference>
<dbReference type="PANTHER" id="PTHR43124:SF3">
    <property type="entry name" value="CHLORAMPHENICOL EFFLUX PUMP RV0191"/>
    <property type="match status" value="1"/>
</dbReference>
<dbReference type="PANTHER" id="PTHR43124">
    <property type="entry name" value="PURINE EFFLUX PUMP PBUE"/>
    <property type="match status" value="1"/>
</dbReference>
<dbReference type="Pfam" id="PF07690">
    <property type="entry name" value="MFS_1"/>
    <property type="match status" value="1"/>
</dbReference>
<dbReference type="PRINTS" id="PR01035">
    <property type="entry name" value="TCRTETA"/>
</dbReference>
<dbReference type="SUPFAM" id="SSF103473">
    <property type="entry name" value="MFS general substrate transporter"/>
    <property type="match status" value="1"/>
</dbReference>
<dbReference type="PROSITE" id="PS50850">
    <property type="entry name" value="MFS"/>
    <property type="match status" value="1"/>
</dbReference>
<organism>
    <name type="scientific">Staphylococcus aureus (strain MRSA252)</name>
    <dbReference type="NCBI Taxonomy" id="282458"/>
    <lineage>
        <taxon>Bacteria</taxon>
        <taxon>Bacillati</taxon>
        <taxon>Bacillota</taxon>
        <taxon>Bacilli</taxon>
        <taxon>Bacillales</taxon>
        <taxon>Staphylococcaceae</taxon>
        <taxon>Staphylococcus</taxon>
    </lineage>
</organism>
<protein>
    <recommendedName>
        <fullName>Quinolone resistance protein NorA</fullName>
    </recommendedName>
</protein>
<proteinExistence type="inferred from homology"/>
<sequence>MNKQIFVLYFNIFLIFLGIGLVIPVLPVYLKDLGLTGSDLGLLVAAFALSQMIISPFGGTLADKLGKKLIICIGLILFSVSEFMFAVGHNFSVLMLSRVIGGMSAGMVMPGVTGLIADVSPSHQKAKNFGYMSAIINSGFILGPGIGGFMAEVSHRMPFYFAGALGILAFIMSVVLIHDPKKSTTSGFQKLEPQLLTKINWKVFITPAILTLVLAFGLSAFETLYSLYTSYKVNYSPKDISIAITGGGIFGALFQIYFFDKFMKYFSELTFIAWSLIYSVIVLVLLVIADGYWTIMVISFAVFIGFDMIRPAITNYFSNIAGDRQGFAGGLNSTFTSMGNFIGPLIAGALFDVHIEAPIYMAIGVSLAGVVIVLIEKQHRAKLKQQDL</sequence>
<accession>Q6GIU7</accession>
<name>NORA_STAAR</name>
<gene>
    <name type="primary">norA</name>
    <name type="ordered locus">SAR0748</name>
</gene>
<comment type="function">
    <text evidence="1">Involved in quinolone resistance. May constitute a membrane-associated active efflux pump of hydrophilic quinolones (By similarity).</text>
</comment>
<comment type="subcellular location">
    <subcellularLocation>
        <location evidence="3">Cell membrane</location>
        <topology evidence="3">Multi-pass membrane protein</topology>
    </subcellularLocation>
</comment>
<comment type="similarity">
    <text evidence="3">Belongs to the major facilitator superfamily. TCR/Tet family.</text>
</comment>
<evidence type="ECO:0000250" key="1"/>
<evidence type="ECO:0000255" key="2"/>
<evidence type="ECO:0000305" key="3"/>
<keyword id="KW-1003">Cell membrane</keyword>
<keyword id="KW-0472">Membrane</keyword>
<keyword id="KW-0812">Transmembrane</keyword>
<keyword id="KW-1133">Transmembrane helix</keyword>
<keyword id="KW-0813">Transport</keyword>
<feature type="chain" id="PRO_0000173371" description="Quinolone resistance protein NorA">
    <location>
        <begin position="1"/>
        <end position="388"/>
    </location>
</feature>
<feature type="transmembrane region" description="Helical" evidence="2">
    <location>
        <begin position="5"/>
        <end position="25"/>
    </location>
</feature>
<feature type="transmembrane region" description="Helical" evidence="2">
    <location>
        <begin position="42"/>
        <end position="62"/>
    </location>
</feature>
<feature type="transmembrane region" description="Helical" evidence="2">
    <location>
        <begin position="69"/>
        <end position="89"/>
    </location>
</feature>
<feature type="transmembrane region" description="Helical" evidence="2">
    <location>
        <begin position="99"/>
        <end position="119"/>
    </location>
</feature>
<feature type="transmembrane region" description="Helical" evidence="2">
    <location>
        <begin position="129"/>
        <end position="149"/>
    </location>
</feature>
<feature type="transmembrane region" description="Helical" evidence="2">
    <location>
        <begin position="157"/>
        <end position="177"/>
    </location>
</feature>
<feature type="transmembrane region" description="Helical" evidence="2">
    <location>
        <begin position="201"/>
        <end position="221"/>
    </location>
</feature>
<feature type="transmembrane region" description="Helical" evidence="2">
    <location>
        <begin position="239"/>
        <end position="259"/>
    </location>
</feature>
<feature type="transmembrane region" description="Helical" evidence="2">
    <location>
        <begin position="269"/>
        <end position="289"/>
    </location>
</feature>
<feature type="transmembrane region" description="Helical" evidence="2">
    <location>
        <begin position="293"/>
        <end position="313"/>
    </location>
</feature>
<feature type="transmembrane region" description="Helical" evidence="2">
    <location>
        <begin position="331"/>
        <end position="351"/>
    </location>
</feature>
<feature type="transmembrane region" description="Helical" evidence="2">
    <location>
        <begin position="355"/>
        <end position="375"/>
    </location>
</feature>
<reference key="1">
    <citation type="journal article" date="2004" name="Proc. Natl. Acad. Sci. U.S.A.">
        <title>Complete genomes of two clinical Staphylococcus aureus strains: evidence for the rapid evolution of virulence and drug resistance.</title>
        <authorList>
            <person name="Holden M.T.G."/>
            <person name="Feil E.J."/>
            <person name="Lindsay J.A."/>
            <person name="Peacock S.J."/>
            <person name="Day N.P.J."/>
            <person name="Enright M.C."/>
            <person name="Foster T.J."/>
            <person name="Moore C.E."/>
            <person name="Hurst L."/>
            <person name="Atkin R."/>
            <person name="Barron A."/>
            <person name="Bason N."/>
            <person name="Bentley S.D."/>
            <person name="Chillingworth C."/>
            <person name="Chillingworth T."/>
            <person name="Churcher C."/>
            <person name="Clark L."/>
            <person name="Corton C."/>
            <person name="Cronin A."/>
            <person name="Doggett J."/>
            <person name="Dowd L."/>
            <person name="Feltwell T."/>
            <person name="Hance Z."/>
            <person name="Harris B."/>
            <person name="Hauser H."/>
            <person name="Holroyd S."/>
            <person name="Jagels K."/>
            <person name="James K.D."/>
            <person name="Lennard N."/>
            <person name="Line A."/>
            <person name="Mayes R."/>
            <person name="Moule S."/>
            <person name="Mungall K."/>
            <person name="Ormond D."/>
            <person name="Quail M.A."/>
            <person name="Rabbinowitsch E."/>
            <person name="Rutherford K.M."/>
            <person name="Sanders M."/>
            <person name="Sharp S."/>
            <person name="Simmonds M."/>
            <person name="Stevens K."/>
            <person name="Whitehead S."/>
            <person name="Barrell B.G."/>
            <person name="Spratt B.G."/>
            <person name="Parkhill J."/>
        </authorList>
    </citation>
    <scope>NUCLEOTIDE SEQUENCE [LARGE SCALE GENOMIC DNA]</scope>
    <source>
        <strain>MRSA252</strain>
    </source>
</reference>